<comment type="catalytic activity">
    <reaction>
        <text>tRNA(Val) + L-valine + ATP = L-valyl-tRNA(Val) + AMP + diphosphate</text>
        <dbReference type="Rhea" id="RHEA:10704"/>
        <dbReference type="Rhea" id="RHEA-COMP:9672"/>
        <dbReference type="Rhea" id="RHEA-COMP:9708"/>
        <dbReference type="ChEBI" id="CHEBI:30616"/>
        <dbReference type="ChEBI" id="CHEBI:33019"/>
        <dbReference type="ChEBI" id="CHEBI:57762"/>
        <dbReference type="ChEBI" id="CHEBI:78442"/>
        <dbReference type="ChEBI" id="CHEBI:78537"/>
        <dbReference type="ChEBI" id="CHEBI:456215"/>
        <dbReference type="EC" id="6.1.1.9"/>
    </reaction>
</comment>
<comment type="similarity">
    <text evidence="2">Belongs to the class-I aminoacyl-tRNA synthetase family.</text>
</comment>
<accession>P49696</accession>
<organism>
    <name type="scientific">Takifugu rubripes</name>
    <name type="common">Japanese pufferfish</name>
    <name type="synonym">Fugu rubripes</name>
    <dbReference type="NCBI Taxonomy" id="31033"/>
    <lineage>
        <taxon>Eukaryota</taxon>
        <taxon>Metazoa</taxon>
        <taxon>Chordata</taxon>
        <taxon>Craniata</taxon>
        <taxon>Vertebrata</taxon>
        <taxon>Euteleostomi</taxon>
        <taxon>Actinopterygii</taxon>
        <taxon>Neopterygii</taxon>
        <taxon>Teleostei</taxon>
        <taxon>Neoteleostei</taxon>
        <taxon>Acanthomorphata</taxon>
        <taxon>Eupercaria</taxon>
        <taxon>Tetraodontiformes</taxon>
        <taxon>Tetradontoidea</taxon>
        <taxon>Tetraodontidae</taxon>
        <taxon>Takifugu</taxon>
    </lineage>
</organism>
<sequence length="1217" mass="138218">MATLYVSPHLDDFRSLLALVAAEYCGNAKQQSQVWQWLSFADNELTPVSCAVVFPLMGMTGLDKKIQQNSRVELMRVLKVLDQALEPRTFLVGESITLADMAVAMAVLLPFKYVLEPSDRNVLMNVTRWFTTCINQPEFLKVLGKISLCEKMVPVTAKTSTEEAAAVHPDAAALNGPPKTEAQLKKEAKKREKLEKFQQKKEMEAKKKMQPVAEKKAKPEKRELGVITYDIPTPSGEKKDVVSPLPDSYSPQYVEAAWYPWWEKQGFFKPEFGRKSIGEQNPRGIFMMCIPPPNVTGSLHLGHALTNAIQDTLTRWHRMRGETTLWNPGCDHAGIATQVVVEKKLMREKGTSRHDLGREKFIEEVWKWKNEKGDRIYHQLKKLGSSLDWDRACFTMDPKLSYAVQEAFIRMHDEGVIYRSKRLVNWSCSLNSAISDIEVDKNELSGRTLLPVPGYKEKVEFGVLVSFAYKVDGSDEEVVVATTRIETMLGDTAVAVHPSDSRYQHLKGKTVLHPFCDRKIPVVFDDFVDMSFGTGAVKITPAHDHNDYEVGVRHNLAFINILDENGFVINVPPPFLGMKRFDARKAVLQALKDRDQFKEIKDNPMVVPVCSRSKDIVEPLMKPQWYVSCSDMGKQAADAVREGRLKIIPDHHSQTWFNWMDNIRDWCISRQLWWGHRIPAYFITVSDPSVKPGEDMDGHYRVSGRTPEEAREKAAKRFNVSPDKIALRQDEDVLDTWFSSGINPFSILGWPNETEDLNVFYPGTLLETGHDILFFWVARMVMMGLKLTGKLPFKEVYHCAVVRDAHGRKMSKSLGNVIDPLDDHIGIALEGLHAQLMDTNLDPLEVEKPKKVQKADYPNCIPECGTDALRFALCAYTSQGRDINLDVNRILGYRHFCNKLWNAVKFAMRTLGDQFVPADTSPAEREESVSDRWILSRLSTAVAQCDAAFRTYDFPAITTAIYNFWLYELCDVYLESVKPVFIKAKEDGSCERPAAVCRQTLYTCLEVGLRLLAPLMPFVTEELYQRLPRRRPQSDPPSICVTPYPDAAEFCWQCEDVDRDIDFIMGVVRTIRSLRSDYKLTKTAADCYLQCTDAATVSLVQKYSLQIQTLSYSQAIVPLMAPQPAPEGCAVAIASDRCTVNMMLKGLIDVEKEVPKLMGKKTDLEKQIEKLSEKISKGDYKEKVPVKVQEQDTEKLRQSQTELEKVKEAMDNFQKMM</sequence>
<keyword id="KW-0030">Aminoacyl-tRNA synthetase</keyword>
<keyword id="KW-0067">ATP-binding</keyword>
<keyword id="KW-0436">Ligase</keyword>
<keyword id="KW-0547">Nucleotide-binding</keyword>
<keyword id="KW-0648">Protein biosynthesis</keyword>
<keyword id="KW-1185">Reference proteome</keyword>
<evidence type="ECO:0000250" key="1"/>
<evidence type="ECO:0000305" key="2"/>
<protein>
    <recommendedName>
        <fullName>Valine--tRNA ligase</fullName>
        <ecNumber>6.1.1.9</ecNumber>
    </recommendedName>
    <alternativeName>
        <fullName>Valyl-tRNA synthetase</fullName>
        <shortName>ValRS</shortName>
    </alternativeName>
</protein>
<dbReference type="EC" id="6.1.1.9"/>
<dbReference type="EMBL" id="X91856">
    <property type="protein sequence ID" value="CAA62967.1"/>
    <property type="molecule type" value="Genomic_DNA"/>
</dbReference>
<dbReference type="SMR" id="P49696"/>
<dbReference type="FunCoup" id="P49696">
    <property type="interactions" value="1456"/>
</dbReference>
<dbReference type="STRING" id="31033.ENSTRUP00000005137"/>
<dbReference type="eggNOG" id="KOG0432">
    <property type="taxonomic scope" value="Eukaryota"/>
</dbReference>
<dbReference type="eggNOG" id="KOG0867">
    <property type="taxonomic scope" value="Eukaryota"/>
</dbReference>
<dbReference type="InParanoid" id="P49696"/>
<dbReference type="BRENDA" id="6.1.1.9">
    <property type="organism ID" value="6209"/>
</dbReference>
<dbReference type="Proteomes" id="UP000005226">
    <property type="component" value="Unplaced"/>
</dbReference>
<dbReference type="GO" id="GO:0005829">
    <property type="term" value="C:cytosol"/>
    <property type="evidence" value="ECO:0007669"/>
    <property type="project" value="TreeGrafter"/>
</dbReference>
<dbReference type="GO" id="GO:0002161">
    <property type="term" value="F:aminoacyl-tRNA deacylase activity"/>
    <property type="evidence" value="ECO:0007669"/>
    <property type="project" value="InterPro"/>
</dbReference>
<dbReference type="GO" id="GO:0005524">
    <property type="term" value="F:ATP binding"/>
    <property type="evidence" value="ECO:0007669"/>
    <property type="project" value="UniProtKB-KW"/>
</dbReference>
<dbReference type="GO" id="GO:0004832">
    <property type="term" value="F:valine-tRNA ligase activity"/>
    <property type="evidence" value="ECO:0007669"/>
    <property type="project" value="UniProtKB-EC"/>
</dbReference>
<dbReference type="GO" id="GO:0006438">
    <property type="term" value="P:valyl-tRNA aminoacylation"/>
    <property type="evidence" value="ECO:0007669"/>
    <property type="project" value="InterPro"/>
</dbReference>
<dbReference type="CDD" id="cd07962">
    <property type="entry name" value="Anticodon_Ia_Val"/>
    <property type="match status" value="1"/>
</dbReference>
<dbReference type="CDD" id="cd10294">
    <property type="entry name" value="GST_C_ValRS_N"/>
    <property type="match status" value="1"/>
</dbReference>
<dbReference type="CDD" id="cd00817">
    <property type="entry name" value="ValRS_core"/>
    <property type="match status" value="1"/>
</dbReference>
<dbReference type="FunFam" id="1.20.1050.10:FF:000006">
    <property type="entry name" value="Elongation factor 1 gamma"/>
    <property type="match status" value="1"/>
</dbReference>
<dbReference type="FunFam" id="3.40.50.620:FF:000119">
    <property type="entry name" value="Putative valine--tRNA ligase-like"/>
    <property type="match status" value="1"/>
</dbReference>
<dbReference type="FunFam" id="1.10.287.380:FF:000002">
    <property type="entry name" value="Valine--tRNA ligase"/>
    <property type="match status" value="1"/>
</dbReference>
<dbReference type="FunFam" id="1.10.730.10:FF:000015">
    <property type="entry name" value="Valine--tRNA ligase"/>
    <property type="match status" value="1"/>
</dbReference>
<dbReference type="FunFam" id="3.40.50.620:FF:000020">
    <property type="entry name" value="Valine--tRNA ligase, mitochondrial"/>
    <property type="match status" value="1"/>
</dbReference>
<dbReference type="FunFam" id="3.90.740.10:FF:000005">
    <property type="entry name" value="Valine--tRNA ligase, mitochondrial"/>
    <property type="match status" value="1"/>
</dbReference>
<dbReference type="Gene3D" id="1.20.1050.10">
    <property type="match status" value="1"/>
</dbReference>
<dbReference type="Gene3D" id="3.40.50.620">
    <property type="entry name" value="HUPs"/>
    <property type="match status" value="2"/>
</dbReference>
<dbReference type="Gene3D" id="1.10.730.10">
    <property type="entry name" value="Isoleucyl-tRNA Synthetase, Domain 1"/>
    <property type="match status" value="1"/>
</dbReference>
<dbReference type="Gene3D" id="1.10.287.380">
    <property type="entry name" value="Valyl-tRNA synthetase, C-terminal domain"/>
    <property type="match status" value="1"/>
</dbReference>
<dbReference type="Gene3D" id="3.90.740.10">
    <property type="entry name" value="Valyl/Leucyl/Isoleucyl-tRNA synthetase, editing domain"/>
    <property type="match status" value="1"/>
</dbReference>
<dbReference type="HAMAP" id="MF_02004">
    <property type="entry name" value="Val_tRNA_synth_type1"/>
    <property type="match status" value="1"/>
</dbReference>
<dbReference type="InterPro" id="IPR001412">
    <property type="entry name" value="aa-tRNA-synth_I_CS"/>
</dbReference>
<dbReference type="InterPro" id="IPR002300">
    <property type="entry name" value="aa-tRNA-synth_Ia"/>
</dbReference>
<dbReference type="InterPro" id="IPR033705">
    <property type="entry name" value="Anticodon_Ia_Val"/>
</dbReference>
<dbReference type="InterPro" id="IPR010987">
    <property type="entry name" value="Glutathione-S-Trfase_C-like"/>
</dbReference>
<dbReference type="InterPro" id="IPR036282">
    <property type="entry name" value="Glutathione-S-Trfase_C_sf"/>
</dbReference>
<dbReference type="InterPro" id="IPR004046">
    <property type="entry name" value="GST_C"/>
</dbReference>
<dbReference type="InterPro" id="IPR013155">
    <property type="entry name" value="M/V/L/I-tRNA-synth_anticd-bd"/>
</dbReference>
<dbReference type="InterPro" id="IPR014729">
    <property type="entry name" value="Rossmann-like_a/b/a_fold"/>
</dbReference>
<dbReference type="InterPro" id="IPR010978">
    <property type="entry name" value="tRNA-bd_arm"/>
</dbReference>
<dbReference type="InterPro" id="IPR009080">
    <property type="entry name" value="tRNAsynth_Ia_anticodon-bd"/>
</dbReference>
<dbReference type="InterPro" id="IPR037118">
    <property type="entry name" value="Val-tRNA_synth_C_sf"/>
</dbReference>
<dbReference type="InterPro" id="IPR019499">
    <property type="entry name" value="Val-tRNA_synth_tRNA-bd"/>
</dbReference>
<dbReference type="InterPro" id="IPR009008">
    <property type="entry name" value="Val/Leu/Ile-tRNA-synth_edit"/>
</dbReference>
<dbReference type="InterPro" id="IPR002303">
    <property type="entry name" value="Valyl-tRNA_ligase"/>
</dbReference>
<dbReference type="NCBIfam" id="NF004349">
    <property type="entry name" value="PRK05729.1"/>
    <property type="match status" value="1"/>
</dbReference>
<dbReference type="NCBIfam" id="TIGR00422">
    <property type="entry name" value="valS"/>
    <property type="match status" value="1"/>
</dbReference>
<dbReference type="PANTHER" id="PTHR11946:SF109">
    <property type="entry name" value="VALINE--TRNA LIGASE"/>
    <property type="match status" value="1"/>
</dbReference>
<dbReference type="PANTHER" id="PTHR11946">
    <property type="entry name" value="VALYL-TRNA SYNTHETASES"/>
    <property type="match status" value="1"/>
</dbReference>
<dbReference type="Pfam" id="PF08264">
    <property type="entry name" value="Anticodon_1"/>
    <property type="match status" value="1"/>
</dbReference>
<dbReference type="Pfam" id="PF00043">
    <property type="entry name" value="GST_C"/>
    <property type="match status" value="1"/>
</dbReference>
<dbReference type="Pfam" id="PF00133">
    <property type="entry name" value="tRNA-synt_1"/>
    <property type="match status" value="1"/>
</dbReference>
<dbReference type="Pfam" id="PF10458">
    <property type="entry name" value="Val_tRNA-synt_C"/>
    <property type="match status" value="1"/>
</dbReference>
<dbReference type="PRINTS" id="PR00986">
    <property type="entry name" value="TRNASYNTHVAL"/>
</dbReference>
<dbReference type="SUPFAM" id="SSF47323">
    <property type="entry name" value="Anticodon-binding domain of a subclass of class I aminoacyl-tRNA synthetases"/>
    <property type="match status" value="1"/>
</dbReference>
<dbReference type="SUPFAM" id="SSF47616">
    <property type="entry name" value="GST C-terminal domain-like"/>
    <property type="match status" value="1"/>
</dbReference>
<dbReference type="SUPFAM" id="SSF52374">
    <property type="entry name" value="Nucleotidylyl transferase"/>
    <property type="match status" value="1"/>
</dbReference>
<dbReference type="SUPFAM" id="SSF46589">
    <property type="entry name" value="tRNA-binding arm"/>
    <property type="match status" value="1"/>
</dbReference>
<dbReference type="SUPFAM" id="SSF50677">
    <property type="entry name" value="ValRS/IleRS/LeuRS editing domain"/>
    <property type="match status" value="1"/>
</dbReference>
<dbReference type="PROSITE" id="PS00178">
    <property type="entry name" value="AA_TRNA_LIGASE_I"/>
    <property type="match status" value="1"/>
</dbReference>
<dbReference type="PROSITE" id="PS50405">
    <property type="entry name" value="GST_CTER"/>
    <property type="match status" value="1"/>
</dbReference>
<gene>
    <name type="primary">vars1</name>
    <name type="synonym">vars</name>
</gene>
<proteinExistence type="inferred from homology"/>
<feature type="chain" id="PRO_0000106256" description="Valine--tRNA ligase">
    <location>
        <begin position="1"/>
        <end position="1217"/>
    </location>
</feature>
<feature type="domain" description="GST C-terminal">
    <location>
        <begin position="27"/>
        <end position="155"/>
    </location>
</feature>
<feature type="short sequence motif" description="'HIGH' region">
    <location>
        <begin position="293"/>
        <end position="303"/>
    </location>
</feature>
<feature type="short sequence motif" description="'KMSKS' region">
    <location>
        <begin position="809"/>
        <end position="813"/>
    </location>
</feature>
<feature type="binding site" evidence="1">
    <location>
        <position position="812"/>
    </location>
    <ligand>
        <name>ATP</name>
        <dbReference type="ChEBI" id="CHEBI:30616"/>
    </ligand>
</feature>
<reference key="1">
    <citation type="journal article" date="1997" name="DNA Seq.">
        <title>Genomic structure and sequence analysis of the valyl-tRNA synthetase gene of the Japanese pufferfish, Fugu rubripes.</title>
        <authorList>
            <person name="Lim E.H."/>
            <person name="Corrochano L.M."/>
            <person name="Elgar G."/>
            <person name="Brenner S."/>
        </authorList>
    </citation>
    <scope>NUCLEOTIDE SEQUENCE [GENOMIC DNA]</scope>
</reference>
<name>SYVC_TAKRU</name>